<name>RL11_SACS2</name>
<dbReference type="EMBL" id="U85262">
    <property type="protein sequence ID" value="AAB99524.1"/>
    <property type="molecule type" value="Genomic_DNA"/>
</dbReference>
<dbReference type="EMBL" id="AE006641">
    <property type="protein sequence ID" value="AAK40675.1"/>
    <property type="status" value="ALT_INIT"/>
    <property type="molecule type" value="Genomic_DNA"/>
</dbReference>
<dbReference type="PIR" id="D90177">
    <property type="entry name" value="D90177"/>
</dbReference>
<dbReference type="RefSeq" id="WP_009990636.1">
    <property type="nucleotide sequence ID" value="NC_002754.1"/>
</dbReference>
<dbReference type="SMR" id="P96037"/>
<dbReference type="FunCoup" id="P96037">
    <property type="interactions" value="211"/>
</dbReference>
<dbReference type="STRING" id="273057.SSO0346"/>
<dbReference type="PaxDb" id="273057-SSO0346"/>
<dbReference type="EnsemblBacteria" id="AAK40675">
    <property type="protein sequence ID" value="AAK40675"/>
    <property type="gene ID" value="SSO0346"/>
</dbReference>
<dbReference type="KEGG" id="sso:SSO0346"/>
<dbReference type="PATRIC" id="fig|273057.12.peg.336"/>
<dbReference type="eggNOG" id="arCOG04372">
    <property type="taxonomic scope" value="Archaea"/>
</dbReference>
<dbReference type="HOGENOM" id="CLU_074237_4_0_2"/>
<dbReference type="InParanoid" id="P96037"/>
<dbReference type="PhylomeDB" id="P96037"/>
<dbReference type="Proteomes" id="UP000001974">
    <property type="component" value="Chromosome"/>
</dbReference>
<dbReference type="GO" id="GO:0015934">
    <property type="term" value="C:large ribosomal subunit"/>
    <property type="evidence" value="ECO:0000318"/>
    <property type="project" value="GO_Central"/>
</dbReference>
<dbReference type="GO" id="GO:0070180">
    <property type="term" value="F:large ribosomal subunit rRNA binding"/>
    <property type="evidence" value="ECO:0000318"/>
    <property type="project" value="GO_Central"/>
</dbReference>
<dbReference type="GO" id="GO:0003735">
    <property type="term" value="F:structural constituent of ribosome"/>
    <property type="evidence" value="ECO:0000318"/>
    <property type="project" value="GO_Central"/>
</dbReference>
<dbReference type="GO" id="GO:0006412">
    <property type="term" value="P:translation"/>
    <property type="evidence" value="ECO:0000318"/>
    <property type="project" value="GO_Central"/>
</dbReference>
<dbReference type="CDD" id="cd00349">
    <property type="entry name" value="Ribosomal_L11"/>
    <property type="match status" value="1"/>
</dbReference>
<dbReference type="FunFam" id="1.10.10.250:FF:000006">
    <property type="entry name" value="50S ribosomal protein L11"/>
    <property type="match status" value="1"/>
</dbReference>
<dbReference type="FunFam" id="3.30.1550.10:FF:000007">
    <property type="entry name" value="50S ribosomal protein L11"/>
    <property type="match status" value="1"/>
</dbReference>
<dbReference type="Gene3D" id="1.10.10.250">
    <property type="entry name" value="Ribosomal protein L11, C-terminal domain"/>
    <property type="match status" value="1"/>
</dbReference>
<dbReference type="Gene3D" id="3.30.1550.10">
    <property type="entry name" value="Ribosomal protein L11/L12, N-terminal domain"/>
    <property type="match status" value="1"/>
</dbReference>
<dbReference type="HAMAP" id="MF_00736">
    <property type="entry name" value="Ribosomal_uL11"/>
    <property type="match status" value="1"/>
</dbReference>
<dbReference type="InterPro" id="IPR000911">
    <property type="entry name" value="Ribosomal_uL11"/>
</dbReference>
<dbReference type="InterPro" id="IPR020783">
    <property type="entry name" value="Ribosomal_uL11_C"/>
</dbReference>
<dbReference type="InterPro" id="IPR036769">
    <property type="entry name" value="Ribosomal_uL11_C_sf"/>
</dbReference>
<dbReference type="InterPro" id="IPR020785">
    <property type="entry name" value="Ribosomal_uL11_CS"/>
</dbReference>
<dbReference type="InterPro" id="IPR020784">
    <property type="entry name" value="Ribosomal_uL11_N"/>
</dbReference>
<dbReference type="InterPro" id="IPR036796">
    <property type="entry name" value="Ribosomal_uL11_N_sf"/>
</dbReference>
<dbReference type="NCBIfam" id="NF002232">
    <property type="entry name" value="PRK01143.1"/>
    <property type="match status" value="1"/>
</dbReference>
<dbReference type="PANTHER" id="PTHR11661">
    <property type="entry name" value="60S RIBOSOMAL PROTEIN L12"/>
    <property type="match status" value="1"/>
</dbReference>
<dbReference type="PANTHER" id="PTHR11661:SF1">
    <property type="entry name" value="LARGE RIBOSOMAL SUBUNIT PROTEIN UL11M"/>
    <property type="match status" value="1"/>
</dbReference>
<dbReference type="Pfam" id="PF00298">
    <property type="entry name" value="Ribosomal_L11"/>
    <property type="match status" value="1"/>
</dbReference>
<dbReference type="Pfam" id="PF03946">
    <property type="entry name" value="Ribosomal_L11_N"/>
    <property type="match status" value="1"/>
</dbReference>
<dbReference type="SMART" id="SM00649">
    <property type="entry name" value="RL11"/>
    <property type="match status" value="1"/>
</dbReference>
<dbReference type="SUPFAM" id="SSF54747">
    <property type="entry name" value="Ribosomal L11/L12e N-terminal domain"/>
    <property type="match status" value="1"/>
</dbReference>
<dbReference type="SUPFAM" id="SSF46906">
    <property type="entry name" value="Ribosomal protein L11, C-terminal domain"/>
    <property type="match status" value="1"/>
</dbReference>
<dbReference type="PROSITE" id="PS00359">
    <property type="entry name" value="RIBOSOMAL_L11"/>
    <property type="match status" value="1"/>
</dbReference>
<comment type="function">
    <text evidence="1">Forms part of the ribosomal stalk which helps the ribosome interact with GTP-bound translation factors.</text>
</comment>
<comment type="subunit">
    <text evidence="1">Part of the ribosomal stalk of the 50S ribosomal subunit. Interacts with L10 and the large rRNA to form the base of the stalk. L10 forms an elongated spine to which L12 dimers bind in a sequential fashion forming a multimeric L10(L12)X complex.</text>
</comment>
<comment type="similarity">
    <text evidence="1">Belongs to the universal ribosomal protein uL11 family.</text>
</comment>
<comment type="sequence caution" evidence="2">
    <conflict type="erroneous initiation">
        <sequence resource="EMBL-CDS" id="AAK40675"/>
    </conflict>
</comment>
<feature type="chain" id="PRO_0000104448" description="Large ribosomal subunit protein uL11">
    <location>
        <begin position="1"/>
        <end position="170"/>
    </location>
</feature>
<protein>
    <recommendedName>
        <fullName evidence="1">Large ribosomal subunit protein uL11</fullName>
    </recommendedName>
    <alternativeName>
        <fullName evidence="2">50S ribosomal protein L11</fullName>
    </alternativeName>
</protein>
<evidence type="ECO:0000255" key="1">
    <source>
        <dbReference type="HAMAP-Rule" id="MF_00736"/>
    </source>
</evidence>
<evidence type="ECO:0000305" key="2"/>
<keyword id="KW-1185">Reference proteome</keyword>
<keyword id="KW-0687">Ribonucleoprotein</keyword>
<keyword id="KW-0689">Ribosomal protein</keyword>
<keyword id="KW-0694">RNA-binding</keyword>
<keyword id="KW-0699">rRNA-binding</keyword>
<gene>
    <name evidence="1" type="primary">rpl11</name>
    <name evidence="1" type="synonym">rpl11Ab</name>
    <name type="ordered locus">SSO0346</name>
</gene>
<sequence length="170" mass="18182">MPIKTIKIMVEGGNVKPGPPLAPTLSQLGLNVGEVVKKLNEATSSFKGMSVPVTIEVDSSTKKYEIKVGIPTTTALLLKEAGASEPSGDPAHKKIGNLSLEQVIKIAIMKKPGLTTKSLKAALKSMLGTAKSIGLTVDNRDPKELVKEVEEGKYDDLLAKYENEWNGVKE</sequence>
<organism>
    <name type="scientific">Saccharolobus solfataricus (strain ATCC 35092 / DSM 1617 / JCM 11322 / P2)</name>
    <name type="common">Sulfolobus solfataricus</name>
    <dbReference type="NCBI Taxonomy" id="273057"/>
    <lineage>
        <taxon>Archaea</taxon>
        <taxon>Thermoproteota</taxon>
        <taxon>Thermoprotei</taxon>
        <taxon>Sulfolobales</taxon>
        <taxon>Sulfolobaceae</taxon>
        <taxon>Saccharolobus</taxon>
    </lineage>
</organism>
<proteinExistence type="inferred from homology"/>
<reference key="1">
    <citation type="journal article" date="1997" name="Biochim. Biophys. Acta">
        <title>Nucleotide sequence of a gene cluster encoding NusG and the L11-L1-L10-L12 ribosomal proteins from the thermophilic archaeon Sulfolobus solfataricus.</title>
        <authorList>
            <person name="Geiger M."/>
            <person name="Groebner P."/>
            <person name="Piendl W."/>
        </authorList>
    </citation>
    <scope>NUCLEOTIDE SEQUENCE [GENOMIC DNA]</scope>
</reference>
<reference key="2">
    <citation type="journal article" date="2001" name="Proc. Natl. Acad. Sci. U.S.A.">
        <title>The complete genome of the crenarchaeon Sulfolobus solfataricus P2.</title>
        <authorList>
            <person name="She Q."/>
            <person name="Singh R.K."/>
            <person name="Confalonieri F."/>
            <person name="Zivanovic Y."/>
            <person name="Allard G."/>
            <person name="Awayez M.J."/>
            <person name="Chan-Weiher C.C.-Y."/>
            <person name="Clausen I.G."/>
            <person name="Curtis B.A."/>
            <person name="De Moors A."/>
            <person name="Erauso G."/>
            <person name="Fletcher C."/>
            <person name="Gordon P.M.K."/>
            <person name="Heikamp-de Jong I."/>
            <person name="Jeffries A.C."/>
            <person name="Kozera C.J."/>
            <person name="Medina N."/>
            <person name="Peng X."/>
            <person name="Thi-Ngoc H.P."/>
            <person name="Redder P."/>
            <person name="Schenk M.E."/>
            <person name="Theriault C."/>
            <person name="Tolstrup N."/>
            <person name="Charlebois R.L."/>
            <person name="Doolittle W.F."/>
            <person name="Duguet M."/>
            <person name="Gaasterland T."/>
            <person name="Garrett R.A."/>
            <person name="Ragan M.A."/>
            <person name="Sensen C.W."/>
            <person name="Van der Oost J."/>
        </authorList>
    </citation>
    <scope>NUCLEOTIDE SEQUENCE [LARGE SCALE GENOMIC DNA]</scope>
    <source>
        <strain>ATCC 35092 / DSM 1617 / JCM 11322 / P2</strain>
    </source>
</reference>
<accession>P96037</accession>